<evidence type="ECO:0000255" key="1">
    <source>
        <dbReference type="HAMAP-Rule" id="MF_01227"/>
    </source>
</evidence>
<organism>
    <name type="scientific">Pseudomonas putida (strain ATCC 47054 / DSM 6125 / CFBP 8728 / NCIMB 11950 / KT2440)</name>
    <dbReference type="NCBI Taxonomy" id="160488"/>
    <lineage>
        <taxon>Bacteria</taxon>
        <taxon>Pseudomonadati</taxon>
        <taxon>Pseudomonadota</taxon>
        <taxon>Gammaproteobacteria</taxon>
        <taxon>Pseudomonadales</taxon>
        <taxon>Pseudomonadaceae</taxon>
        <taxon>Pseudomonas</taxon>
    </lineage>
</organism>
<keyword id="KW-0067">ATP-binding</keyword>
<keyword id="KW-0315">Glutamine amidotransferase</keyword>
<keyword id="KW-0436">Ligase</keyword>
<keyword id="KW-0460">Magnesium</keyword>
<keyword id="KW-0479">Metal-binding</keyword>
<keyword id="KW-0547">Nucleotide-binding</keyword>
<keyword id="KW-0665">Pyrimidine biosynthesis</keyword>
<keyword id="KW-1185">Reference proteome</keyword>
<accession>Q88MG1</accession>
<protein>
    <recommendedName>
        <fullName evidence="1">CTP synthase</fullName>
        <ecNumber evidence="1">6.3.4.2</ecNumber>
    </recommendedName>
    <alternativeName>
        <fullName evidence="1">Cytidine 5'-triphosphate synthase</fullName>
    </alternativeName>
    <alternativeName>
        <fullName evidence="1">Cytidine triphosphate synthetase</fullName>
        <shortName evidence="1">CTP synthetase</shortName>
        <shortName evidence="1">CTPS</shortName>
    </alternativeName>
    <alternativeName>
        <fullName evidence="1">UTP--ammonia ligase</fullName>
    </alternativeName>
</protein>
<sequence>MTRYIFVTGGVVSSLGKGIASASLAAILEARGLKVTMLKLDPYINVDPGTMSPFQHGEVFVTHDGAETDLDLGHYERFIRTTMTQNNNFTTGRIYEHVLRKERRGDYLGATIQVIPHITDEIKRRIIKGAGDADVALVEIGGTVGDIESQPFLEAIRQLRVEVGSKRAMLMHLTLVPYIATAGETKTKPTQHSVKELRSIGLQPDVLICRSDHPVDASSRRKIALFTNVEERAVISLEDVDTIYKIPGVLHAQGLDDFVVERFGLQCNGADLSEWDKVVDAKLNPEHEVTIAMVGKYMELLDAYKSLIEAMSHAGITNRTKVNLRYIDSEDIENQGTSLLEGADAILVPGGFGLRGVEGKITAVQYARENKVPYLGICLGMQVAVIEFARNVMGWKDANSTEFDRNSGHPVVGLITEWADATGAVETRDEASDLGGTMRLGAQDCQLAAGSKVHDCYGKDVITERHRHRYEVNNNLLPQLVEAGLVVSGRSEDGALVEVVESKDHPWFVACQFHPEFTSTPRDGHPLFSGFVKAALAQKNKA</sequence>
<dbReference type="EC" id="6.3.4.2" evidence="1"/>
<dbReference type="EMBL" id="AE015451">
    <property type="protein sequence ID" value="AAN67231.1"/>
    <property type="molecule type" value="Genomic_DNA"/>
</dbReference>
<dbReference type="RefSeq" id="NP_743767.1">
    <property type="nucleotide sequence ID" value="NC_002947.4"/>
</dbReference>
<dbReference type="RefSeq" id="WP_003252329.1">
    <property type="nucleotide sequence ID" value="NZ_CP169744.1"/>
</dbReference>
<dbReference type="SMR" id="Q88MG1"/>
<dbReference type="STRING" id="160488.PP_1610"/>
<dbReference type="PaxDb" id="160488-PP_1610"/>
<dbReference type="KEGG" id="ppu:PP_1610"/>
<dbReference type="PATRIC" id="fig|160488.4.peg.1701"/>
<dbReference type="eggNOG" id="COG0504">
    <property type="taxonomic scope" value="Bacteria"/>
</dbReference>
<dbReference type="HOGENOM" id="CLU_011675_5_0_6"/>
<dbReference type="OrthoDB" id="9801107at2"/>
<dbReference type="PhylomeDB" id="Q88MG1"/>
<dbReference type="BioCyc" id="PPUT160488:G1G01-1707-MONOMER"/>
<dbReference type="UniPathway" id="UPA00159">
    <property type="reaction ID" value="UER00277"/>
</dbReference>
<dbReference type="Proteomes" id="UP000000556">
    <property type="component" value="Chromosome"/>
</dbReference>
<dbReference type="GO" id="GO:0005829">
    <property type="term" value="C:cytosol"/>
    <property type="evidence" value="ECO:0007669"/>
    <property type="project" value="TreeGrafter"/>
</dbReference>
<dbReference type="GO" id="GO:0005524">
    <property type="term" value="F:ATP binding"/>
    <property type="evidence" value="ECO:0007669"/>
    <property type="project" value="UniProtKB-KW"/>
</dbReference>
<dbReference type="GO" id="GO:0003883">
    <property type="term" value="F:CTP synthase activity"/>
    <property type="evidence" value="ECO:0007669"/>
    <property type="project" value="UniProtKB-UniRule"/>
</dbReference>
<dbReference type="GO" id="GO:0004359">
    <property type="term" value="F:glutaminase activity"/>
    <property type="evidence" value="ECO:0007669"/>
    <property type="project" value="RHEA"/>
</dbReference>
<dbReference type="GO" id="GO:0042802">
    <property type="term" value="F:identical protein binding"/>
    <property type="evidence" value="ECO:0007669"/>
    <property type="project" value="TreeGrafter"/>
</dbReference>
<dbReference type="GO" id="GO:0046872">
    <property type="term" value="F:metal ion binding"/>
    <property type="evidence" value="ECO:0007669"/>
    <property type="project" value="UniProtKB-KW"/>
</dbReference>
<dbReference type="GO" id="GO:0044210">
    <property type="term" value="P:'de novo' CTP biosynthetic process"/>
    <property type="evidence" value="ECO:0007669"/>
    <property type="project" value="UniProtKB-UniRule"/>
</dbReference>
<dbReference type="GO" id="GO:0019856">
    <property type="term" value="P:pyrimidine nucleobase biosynthetic process"/>
    <property type="evidence" value="ECO:0007669"/>
    <property type="project" value="TreeGrafter"/>
</dbReference>
<dbReference type="CDD" id="cd03113">
    <property type="entry name" value="CTPS_N"/>
    <property type="match status" value="1"/>
</dbReference>
<dbReference type="CDD" id="cd01746">
    <property type="entry name" value="GATase1_CTP_Synthase"/>
    <property type="match status" value="1"/>
</dbReference>
<dbReference type="FunFam" id="3.40.50.300:FF:000009">
    <property type="entry name" value="CTP synthase"/>
    <property type="match status" value="1"/>
</dbReference>
<dbReference type="FunFam" id="3.40.50.880:FF:000002">
    <property type="entry name" value="CTP synthase"/>
    <property type="match status" value="1"/>
</dbReference>
<dbReference type="Gene3D" id="3.40.50.880">
    <property type="match status" value="1"/>
</dbReference>
<dbReference type="Gene3D" id="3.40.50.300">
    <property type="entry name" value="P-loop containing nucleotide triphosphate hydrolases"/>
    <property type="match status" value="1"/>
</dbReference>
<dbReference type="HAMAP" id="MF_01227">
    <property type="entry name" value="PyrG"/>
    <property type="match status" value="1"/>
</dbReference>
<dbReference type="InterPro" id="IPR029062">
    <property type="entry name" value="Class_I_gatase-like"/>
</dbReference>
<dbReference type="InterPro" id="IPR004468">
    <property type="entry name" value="CTP_synthase"/>
</dbReference>
<dbReference type="InterPro" id="IPR017456">
    <property type="entry name" value="CTP_synthase_N"/>
</dbReference>
<dbReference type="InterPro" id="IPR017926">
    <property type="entry name" value="GATASE"/>
</dbReference>
<dbReference type="InterPro" id="IPR033828">
    <property type="entry name" value="GATase1_CTP_Synthase"/>
</dbReference>
<dbReference type="InterPro" id="IPR027417">
    <property type="entry name" value="P-loop_NTPase"/>
</dbReference>
<dbReference type="NCBIfam" id="NF003792">
    <property type="entry name" value="PRK05380.1"/>
    <property type="match status" value="1"/>
</dbReference>
<dbReference type="NCBIfam" id="TIGR00337">
    <property type="entry name" value="PyrG"/>
    <property type="match status" value="1"/>
</dbReference>
<dbReference type="PANTHER" id="PTHR11550">
    <property type="entry name" value="CTP SYNTHASE"/>
    <property type="match status" value="1"/>
</dbReference>
<dbReference type="PANTHER" id="PTHR11550:SF0">
    <property type="entry name" value="CTP SYNTHASE-RELATED"/>
    <property type="match status" value="1"/>
</dbReference>
<dbReference type="Pfam" id="PF06418">
    <property type="entry name" value="CTP_synth_N"/>
    <property type="match status" value="1"/>
</dbReference>
<dbReference type="Pfam" id="PF00117">
    <property type="entry name" value="GATase"/>
    <property type="match status" value="1"/>
</dbReference>
<dbReference type="SUPFAM" id="SSF52317">
    <property type="entry name" value="Class I glutamine amidotransferase-like"/>
    <property type="match status" value="1"/>
</dbReference>
<dbReference type="SUPFAM" id="SSF52540">
    <property type="entry name" value="P-loop containing nucleoside triphosphate hydrolases"/>
    <property type="match status" value="1"/>
</dbReference>
<dbReference type="PROSITE" id="PS51273">
    <property type="entry name" value="GATASE_TYPE_1"/>
    <property type="match status" value="1"/>
</dbReference>
<comment type="function">
    <text evidence="1">Catalyzes the ATP-dependent amination of UTP to CTP with either L-glutamine or ammonia as the source of nitrogen. Regulates intracellular CTP levels through interactions with the four ribonucleotide triphosphates.</text>
</comment>
<comment type="catalytic activity">
    <reaction evidence="1">
        <text>UTP + L-glutamine + ATP + H2O = CTP + L-glutamate + ADP + phosphate + 2 H(+)</text>
        <dbReference type="Rhea" id="RHEA:26426"/>
        <dbReference type="ChEBI" id="CHEBI:15377"/>
        <dbReference type="ChEBI" id="CHEBI:15378"/>
        <dbReference type="ChEBI" id="CHEBI:29985"/>
        <dbReference type="ChEBI" id="CHEBI:30616"/>
        <dbReference type="ChEBI" id="CHEBI:37563"/>
        <dbReference type="ChEBI" id="CHEBI:43474"/>
        <dbReference type="ChEBI" id="CHEBI:46398"/>
        <dbReference type="ChEBI" id="CHEBI:58359"/>
        <dbReference type="ChEBI" id="CHEBI:456216"/>
        <dbReference type="EC" id="6.3.4.2"/>
    </reaction>
</comment>
<comment type="catalytic activity">
    <reaction evidence="1">
        <text>L-glutamine + H2O = L-glutamate + NH4(+)</text>
        <dbReference type="Rhea" id="RHEA:15889"/>
        <dbReference type="ChEBI" id="CHEBI:15377"/>
        <dbReference type="ChEBI" id="CHEBI:28938"/>
        <dbReference type="ChEBI" id="CHEBI:29985"/>
        <dbReference type="ChEBI" id="CHEBI:58359"/>
    </reaction>
</comment>
<comment type="catalytic activity">
    <reaction evidence="1">
        <text>UTP + NH4(+) + ATP = CTP + ADP + phosphate + 2 H(+)</text>
        <dbReference type="Rhea" id="RHEA:16597"/>
        <dbReference type="ChEBI" id="CHEBI:15378"/>
        <dbReference type="ChEBI" id="CHEBI:28938"/>
        <dbReference type="ChEBI" id="CHEBI:30616"/>
        <dbReference type="ChEBI" id="CHEBI:37563"/>
        <dbReference type="ChEBI" id="CHEBI:43474"/>
        <dbReference type="ChEBI" id="CHEBI:46398"/>
        <dbReference type="ChEBI" id="CHEBI:456216"/>
    </reaction>
</comment>
<comment type="activity regulation">
    <text evidence="1">Allosterically activated by GTP, when glutamine is the substrate; GTP has no effect on the reaction when ammonia is the substrate. The allosteric effector GTP functions by stabilizing the protein conformation that binds the tetrahedral intermediate(s) formed during glutamine hydrolysis. Inhibited by the product CTP, via allosteric rather than competitive inhibition.</text>
</comment>
<comment type="pathway">
    <text evidence="1">Pyrimidine metabolism; CTP biosynthesis via de novo pathway; CTP from UDP: step 2/2.</text>
</comment>
<comment type="subunit">
    <text evidence="1">Homotetramer.</text>
</comment>
<comment type="miscellaneous">
    <text evidence="1">CTPSs have evolved a hybrid strategy for distinguishing between UTP and CTP. The overlapping regions of the product feedback inhibitory and substrate sites recognize a common feature in both compounds, the triphosphate moiety. To differentiate isosteric substrate and product pyrimidine rings, an additional pocket far from the expected kinase/ligase catalytic site, specifically recognizes the cytosine and ribose portions of the product inhibitor.</text>
</comment>
<comment type="similarity">
    <text evidence="1">Belongs to the CTP synthase family.</text>
</comment>
<proteinExistence type="inferred from homology"/>
<gene>
    <name evidence="1" type="primary">pyrG</name>
    <name type="ordered locus">PP_1610</name>
</gene>
<name>PYRG_PSEPK</name>
<reference key="1">
    <citation type="journal article" date="2002" name="Environ. Microbiol.">
        <title>Complete genome sequence and comparative analysis of the metabolically versatile Pseudomonas putida KT2440.</title>
        <authorList>
            <person name="Nelson K.E."/>
            <person name="Weinel C."/>
            <person name="Paulsen I.T."/>
            <person name="Dodson R.J."/>
            <person name="Hilbert H."/>
            <person name="Martins dos Santos V.A.P."/>
            <person name="Fouts D.E."/>
            <person name="Gill S.R."/>
            <person name="Pop M."/>
            <person name="Holmes M."/>
            <person name="Brinkac L.M."/>
            <person name="Beanan M.J."/>
            <person name="DeBoy R.T."/>
            <person name="Daugherty S.C."/>
            <person name="Kolonay J.F."/>
            <person name="Madupu R."/>
            <person name="Nelson W.C."/>
            <person name="White O."/>
            <person name="Peterson J.D."/>
            <person name="Khouri H.M."/>
            <person name="Hance I."/>
            <person name="Chris Lee P."/>
            <person name="Holtzapple E.K."/>
            <person name="Scanlan D."/>
            <person name="Tran K."/>
            <person name="Moazzez A."/>
            <person name="Utterback T.R."/>
            <person name="Rizzo M."/>
            <person name="Lee K."/>
            <person name="Kosack D."/>
            <person name="Moestl D."/>
            <person name="Wedler H."/>
            <person name="Lauber J."/>
            <person name="Stjepandic D."/>
            <person name="Hoheisel J."/>
            <person name="Straetz M."/>
            <person name="Heim S."/>
            <person name="Kiewitz C."/>
            <person name="Eisen J.A."/>
            <person name="Timmis K.N."/>
            <person name="Duesterhoeft A."/>
            <person name="Tuemmler B."/>
            <person name="Fraser C.M."/>
        </authorList>
    </citation>
    <scope>NUCLEOTIDE SEQUENCE [LARGE SCALE GENOMIC DNA]</scope>
    <source>
        <strain>ATCC 47054 / DSM 6125 / CFBP 8728 / NCIMB 11950 / KT2440</strain>
    </source>
</reference>
<feature type="chain" id="PRO_0000138211" description="CTP synthase">
    <location>
        <begin position="1"/>
        <end position="542"/>
    </location>
</feature>
<feature type="domain" description="Glutamine amidotransferase type-1" evidence="1">
    <location>
        <begin position="290"/>
        <end position="541"/>
    </location>
</feature>
<feature type="region of interest" description="Amidoligase domain" evidence="1">
    <location>
        <begin position="1"/>
        <end position="265"/>
    </location>
</feature>
<feature type="active site" description="Nucleophile; for glutamine hydrolysis" evidence="1">
    <location>
        <position position="378"/>
    </location>
</feature>
<feature type="active site" evidence="1">
    <location>
        <position position="514"/>
    </location>
</feature>
<feature type="active site" evidence="1">
    <location>
        <position position="516"/>
    </location>
</feature>
<feature type="binding site" evidence="1">
    <location>
        <position position="13"/>
    </location>
    <ligand>
        <name>CTP</name>
        <dbReference type="ChEBI" id="CHEBI:37563"/>
        <note>allosteric inhibitor</note>
    </ligand>
</feature>
<feature type="binding site" evidence="1">
    <location>
        <position position="13"/>
    </location>
    <ligand>
        <name>UTP</name>
        <dbReference type="ChEBI" id="CHEBI:46398"/>
    </ligand>
</feature>
<feature type="binding site" evidence="1">
    <location>
        <begin position="14"/>
        <end position="19"/>
    </location>
    <ligand>
        <name>ATP</name>
        <dbReference type="ChEBI" id="CHEBI:30616"/>
    </ligand>
</feature>
<feature type="binding site" evidence="1">
    <location>
        <position position="71"/>
    </location>
    <ligand>
        <name>ATP</name>
        <dbReference type="ChEBI" id="CHEBI:30616"/>
    </ligand>
</feature>
<feature type="binding site" evidence="1">
    <location>
        <position position="71"/>
    </location>
    <ligand>
        <name>Mg(2+)</name>
        <dbReference type="ChEBI" id="CHEBI:18420"/>
    </ligand>
</feature>
<feature type="binding site" evidence="1">
    <location>
        <position position="139"/>
    </location>
    <ligand>
        <name>Mg(2+)</name>
        <dbReference type="ChEBI" id="CHEBI:18420"/>
    </ligand>
</feature>
<feature type="binding site" evidence="1">
    <location>
        <begin position="146"/>
        <end position="148"/>
    </location>
    <ligand>
        <name>CTP</name>
        <dbReference type="ChEBI" id="CHEBI:37563"/>
        <note>allosteric inhibitor</note>
    </ligand>
</feature>
<feature type="binding site" evidence="1">
    <location>
        <begin position="186"/>
        <end position="191"/>
    </location>
    <ligand>
        <name>CTP</name>
        <dbReference type="ChEBI" id="CHEBI:37563"/>
        <note>allosteric inhibitor</note>
    </ligand>
</feature>
<feature type="binding site" evidence="1">
    <location>
        <begin position="186"/>
        <end position="191"/>
    </location>
    <ligand>
        <name>UTP</name>
        <dbReference type="ChEBI" id="CHEBI:46398"/>
    </ligand>
</feature>
<feature type="binding site" evidence="1">
    <location>
        <position position="222"/>
    </location>
    <ligand>
        <name>CTP</name>
        <dbReference type="ChEBI" id="CHEBI:37563"/>
        <note>allosteric inhibitor</note>
    </ligand>
</feature>
<feature type="binding site" evidence="1">
    <location>
        <position position="222"/>
    </location>
    <ligand>
        <name>UTP</name>
        <dbReference type="ChEBI" id="CHEBI:46398"/>
    </ligand>
</feature>
<feature type="binding site" evidence="1">
    <location>
        <position position="351"/>
    </location>
    <ligand>
        <name>L-glutamine</name>
        <dbReference type="ChEBI" id="CHEBI:58359"/>
    </ligand>
</feature>
<feature type="binding site" evidence="1">
    <location>
        <begin position="379"/>
        <end position="382"/>
    </location>
    <ligand>
        <name>L-glutamine</name>
        <dbReference type="ChEBI" id="CHEBI:58359"/>
    </ligand>
</feature>
<feature type="binding site" evidence="1">
    <location>
        <position position="402"/>
    </location>
    <ligand>
        <name>L-glutamine</name>
        <dbReference type="ChEBI" id="CHEBI:58359"/>
    </ligand>
</feature>
<feature type="binding site" evidence="1">
    <location>
        <position position="469"/>
    </location>
    <ligand>
        <name>L-glutamine</name>
        <dbReference type="ChEBI" id="CHEBI:58359"/>
    </ligand>
</feature>